<evidence type="ECO:0000255" key="1">
    <source>
        <dbReference type="HAMAP-Rule" id="MF_00298"/>
    </source>
</evidence>
<organism>
    <name type="scientific">Escherichia coli (strain SE11)</name>
    <dbReference type="NCBI Taxonomy" id="409438"/>
    <lineage>
        <taxon>Bacteria</taxon>
        <taxon>Pseudomonadati</taxon>
        <taxon>Pseudomonadota</taxon>
        <taxon>Gammaproteobacteria</taxon>
        <taxon>Enterobacterales</taxon>
        <taxon>Enterobacteriaceae</taxon>
        <taxon>Escherichia</taxon>
    </lineage>
</organism>
<accession>B6I6V5</accession>
<proteinExistence type="inferred from homology"/>
<keyword id="KW-0378">Hydrolase</keyword>
<sequence>MIDDDGYRPNVGIVICNRQGQVMWARRFGQHSWQFPQGGINPGESAEQAMYRELFEEVGLSRKDVRILASTRNWLRYKLPKRLVRWDTKPVCIGQKQKWFLLQLVSGDAEINMQTSSTPEFDGWRWVSYWYPVRQVVSFKRDVYRRVMKEFASVVMSLQENTPKPQNASAYRRKRG</sequence>
<reference key="1">
    <citation type="journal article" date="2008" name="DNA Res.">
        <title>Complete genome sequence and comparative analysis of the wild-type commensal Escherichia coli strain SE11 isolated from a healthy adult.</title>
        <authorList>
            <person name="Oshima K."/>
            <person name="Toh H."/>
            <person name="Ogura Y."/>
            <person name="Sasamoto H."/>
            <person name="Morita H."/>
            <person name="Park S.-H."/>
            <person name="Ooka T."/>
            <person name="Iyoda S."/>
            <person name="Taylor T.D."/>
            <person name="Hayashi T."/>
            <person name="Itoh K."/>
            <person name="Hattori M."/>
        </authorList>
    </citation>
    <scope>NUCLEOTIDE SEQUENCE [LARGE SCALE GENOMIC DNA]</scope>
    <source>
        <strain>SE11</strain>
    </source>
</reference>
<dbReference type="EC" id="3.6.1.-" evidence="1"/>
<dbReference type="EMBL" id="AP009240">
    <property type="protein sequence ID" value="BAG78611.1"/>
    <property type="molecule type" value="Genomic_DNA"/>
</dbReference>
<dbReference type="RefSeq" id="WP_000564489.1">
    <property type="nucleotide sequence ID" value="NC_011415.1"/>
</dbReference>
<dbReference type="SMR" id="B6I6V5"/>
<dbReference type="GeneID" id="75203778"/>
<dbReference type="KEGG" id="ecy:ECSE_3087"/>
<dbReference type="HOGENOM" id="CLU_087195_3_2_6"/>
<dbReference type="Proteomes" id="UP000008199">
    <property type="component" value="Chromosome"/>
</dbReference>
<dbReference type="GO" id="GO:0005737">
    <property type="term" value="C:cytoplasm"/>
    <property type="evidence" value="ECO:0007669"/>
    <property type="project" value="TreeGrafter"/>
</dbReference>
<dbReference type="GO" id="GO:0034353">
    <property type="term" value="F:mRNA 5'-diphosphatase activity"/>
    <property type="evidence" value="ECO:0007669"/>
    <property type="project" value="TreeGrafter"/>
</dbReference>
<dbReference type="GO" id="GO:0006402">
    <property type="term" value="P:mRNA catabolic process"/>
    <property type="evidence" value="ECO:0007669"/>
    <property type="project" value="TreeGrafter"/>
</dbReference>
<dbReference type="CDD" id="cd03671">
    <property type="entry name" value="NUDIX_Ap4A_hydrolase_plant_like"/>
    <property type="match status" value="1"/>
</dbReference>
<dbReference type="FunFam" id="3.90.79.10:FF:000001">
    <property type="entry name" value="RNA pyrophosphohydrolase"/>
    <property type="match status" value="1"/>
</dbReference>
<dbReference type="Gene3D" id="3.90.79.10">
    <property type="entry name" value="Nucleoside Triphosphate Pyrophosphohydrolase"/>
    <property type="match status" value="1"/>
</dbReference>
<dbReference type="HAMAP" id="MF_00298">
    <property type="entry name" value="Nudix_RppH"/>
    <property type="match status" value="1"/>
</dbReference>
<dbReference type="InterPro" id="IPR020476">
    <property type="entry name" value="Nudix_hydrolase"/>
</dbReference>
<dbReference type="InterPro" id="IPR015797">
    <property type="entry name" value="NUDIX_hydrolase-like_dom_sf"/>
</dbReference>
<dbReference type="InterPro" id="IPR020084">
    <property type="entry name" value="NUDIX_hydrolase_CS"/>
</dbReference>
<dbReference type="InterPro" id="IPR000086">
    <property type="entry name" value="NUDIX_hydrolase_dom"/>
</dbReference>
<dbReference type="InterPro" id="IPR022927">
    <property type="entry name" value="RppH"/>
</dbReference>
<dbReference type="NCBIfam" id="NF001934">
    <property type="entry name" value="PRK00714.1-1"/>
    <property type="match status" value="1"/>
</dbReference>
<dbReference type="NCBIfam" id="NF001937">
    <property type="entry name" value="PRK00714.1-4"/>
    <property type="match status" value="1"/>
</dbReference>
<dbReference type="NCBIfam" id="NF001938">
    <property type="entry name" value="PRK00714.1-5"/>
    <property type="match status" value="1"/>
</dbReference>
<dbReference type="PANTHER" id="PTHR23114">
    <property type="entry name" value="M7GPPPN-MRNA HYDROLASE"/>
    <property type="match status" value="1"/>
</dbReference>
<dbReference type="PANTHER" id="PTHR23114:SF17">
    <property type="entry name" value="M7GPPPN-MRNA HYDROLASE"/>
    <property type="match status" value="1"/>
</dbReference>
<dbReference type="Pfam" id="PF00293">
    <property type="entry name" value="NUDIX"/>
    <property type="match status" value="1"/>
</dbReference>
<dbReference type="PRINTS" id="PR00502">
    <property type="entry name" value="NUDIXFAMILY"/>
</dbReference>
<dbReference type="SUPFAM" id="SSF55811">
    <property type="entry name" value="Nudix"/>
    <property type="match status" value="1"/>
</dbReference>
<dbReference type="PROSITE" id="PS51462">
    <property type="entry name" value="NUDIX"/>
    <property type="match status" value="1"/>
</dbReference>
<dbReference type="PROSITE" id="PS00893">
    <property type="entry name" value="NUDIX_BOX"/>
    <property type="match status" value="1"/>
</dbReference>
<feature type="chain" id="PRO_1000115277" description="RNA pyrophosphohydrolase">
    <location>
        <begin position="1"/>
        <end position="176"/>
    </location>
</feature>
<feature type="domain" description="Nudix hydrolase" evidence="1">
    <location>
        <begin position="6"/>
        <end position="149"/>
    </location>
</feature>
<feature type="short sequence motif" description="Nudix box">
    <location>
        <begin position="38"/>
        <end position="59"/>
    </location>
</feature>
<gene>
    <name evidence="1" type="primary">rppH</name>
    <name evidence="1" type="synonym">nudH</name>
    <name type="ordered locus">ECSE_3087</name>
</gene>
<name>RPPH_ECOSE</name>
<comment type="function">
    <text evidence="1">Accelerates the degradation of transcripts by removing pyrophosphate from the 5'-end of triphosphorylated RNA, leading to a more labile monophosphorylated state that can stimulate subsequent ribonuclease cleavage.</text>
</comment>
<comment type="cofactor">
    <cofactor evidence="1">
        <name>a divalent metal cation</name>
        <dbReference type="ChEBI" id="CHEBI:60240"/>
    </cofactor>
</comment>
<comment type="similarity">
    <text evidence="1">Belongs to the Nudix hydrolase family. RppH subfamily.</text>
</comment>
<protein>
    <recommendedName>
        <fullName evidence="1">RNA pyrophosphohydrolase</fullName>
        <ecNumber evidence="1">3.6.1.-</ecNumber>
    </recommendedName>
    <alternativeName>
        <fullName evidence="1">(Di)nucleoside polyphosphate hydrolase</fullName>
    </alternativeName>
</protein>